<protein>
    <recommendedName>
        <fullName evidence="1">Trans-aconitate 2-methyltransferase</fullName>
        <ecNumber evidence="1">2.1.1.144</ecNumber>
    </recommendedName>
</protein>
<comment type="function">
    <text evidence="1">Catalyzes the S-adenosylmethionine monomethyl esterification of trans-aconitate.</text>
</comment>
<comment type="catalytic activity">
    <reaction evidence="1">
        <text>trans-aconitate + S-adenosyl-L-methionine = (E)-3-(methoxycarbonyl)pent-2-enedioate + S-adenosyl-L-homocysteine</text>
        <dbReference type="Rhea" id="RHEA:14969"/>
        <dbReference type="ChEBI" id="CHEBI:15708"/>
        <dbReference type="ChEBI" id="CHEBI:57470"/>
        <dbReference type="ChEBI" id="CHEBI:57856"/>
        <dbReference type="ChEBI" id="CHEBI:59789"/>
        <dbReference type="EC" id="2.1.1.144"/>
    </reaction>
</comment>
<comment type="subcellular location">
    <subcellularLocation>
        <location evidence="1">Cytoplasm</location>
    </subcellularLocation>
</comment>
<comment type="similarity">
    <text evidence="1">Belongs to the methyltransferase superfamily. Tam family.</text>
</comment>
<proteinExistence type="inferred from homology"/>
<keyword id="KW-0963">Cytoplasm</keyword>
<keyword id="KW-0489">Methyltransferase</keyword>
<keyword id="KW-1185">Reference proteome</keyword>
<keyword id="KW-0949">S-adenosyl-L-methionine</keyword>
<keyword id="KW-0808">Transferase</keyword>
<accession>Q8ZDP7</accession>
<accession>Q0WE15</accession>
<gene>
    <name evidence="1" type="primary">tam</name>
    <name type="ordered locus">YPO2509</name>
    <name type="ordered locus">y1678</name>
    <name type="ordered locus">YP_2324</name>
</gene>
<evidence type="ECO:0000255" key="1">
    <source>
        <dbReference type="HAMAP-Rule" id="MF_00560"/>
    </source>
</evidence>
<organism>
    <name type="scientific">Yersinia pestis</name>
    <dbReference type="NCBI Taxonomy" id="632"/>
    <lineage>
        <taxon>Bacteria</taxon>
        <taxon>Pseudomonadati</taxon>
        <taxon>Pseudomonadota</taxon>
        <taxon>Gammaproteobacteria</taxon>
        <taxon>Enterobacterales</taxon>
        <taxon>Yersiniaceae</taxon>
        <taxon>Yersinia</taxon>
    </lineage>
</organism>
<feature type="chain" id="PRO_0000218088" description="Trans-aconitate 2-methyltransferase">
    <location>
        <begin position="1"/>
        <end position="258"/>
    </location>
</feature>
<dbReference type="EC" id="2.1.1.144" evidence="1"/>
<dbReference type="EMBL" id="AL590842">
    <property type="protein sequence ID" value="CAL21137.1"/>
    <property type="molecule type" value="Genomic_DNA"/>
</dbReference>
<dbReference type="EMBL" id="AE009952">
    <property type="protein sequence ID" value="AAM85247.1"/>
    <property type="molecule type" value="Genomic_DNA"/>
</dbReference>
<dbReference type="EMBL" id="AE017042">
    <property type="protein sequence ID" value="AAS62530.1"/>
    <property type="molecule type" value="Genomic_DNA"/>
</dbReference>
<dbReference type="PIR" id="AF0306">
    <property type="entry name" value="AF0306"/>
</dbReference>
<dbReference type="RefSeq" id="WP_002210232.1">
    <property type="nucleotide sequence ID" value="NZ_WUCM01000061.1"/>
</dbReference>
<dbReference type="RefSeq" id="YP_002347473.1">
    <property type="nucleotide sequence ID" value="NC_003143.1"/>
</dbReference>
<dbReference type="SMR" id="Q8ZDP7"/>
<dbReference type="STRING" id="214092.YPO2509"/>
<dbReference type="PaxDb" id="214092-YPO2509"/>
<dbReference type="DNASU" id="1146625"/>
<dbReference type="EnsemblBacteria" id="AAS62530">
    <property type="protein sequence ID" value="AAS62530"/>
    <property type="gene ID" value="YP_2324"/>
</dbReference>
<dbReference type="GeneID" id="57976176"/>
<dbReference type="KEGG" id="ype:YPO2509"/>
<dbReference type="KEGG" id="ypk:y1678"/>
<dbReference type="KEGG" id="ypm:YP_2324"/>
<dbReference type="PATRIC" id="fig|1028802.3.peg.518"/>
<dbReference type="eggNOG" id="COG4106">
    <property type="taxonomic scope" value="Bacteria"/>
</dbReference>
<dbReference type="HOGENOM" id="CLU_037990_5_2_6"/>
<dbReference type="OMA" id="YLAFADH"/>
<dbReference type="OrthoDB" id="9795085at2"/>
<dbReference type="Proteomes" id="UP000000815">
    <property type="component" value="Chromosome"/>
</dbReference>
<dbReference type="Proteomes" id="UP000001019">
    <property type="component" value="Chromosome"/>
</dbReference>
<dbReference type="Proteomes" id="UP000002490">
    <property type="component" value="Chromosome"/>
</dbReference>
<dbReference type="GO" id="GO:0005737">
    <property type="term" value="C:cytoplasm"/>
    <property type="evidence" value="ECO:0007669"/>
    <property type="project" value="UniProtKB-SubCell"/>
</dbReference>
<dbReference type="GO" id="GO:0030798">
    <property type="term" value="F:trans-aconitate 2-methyltransferase activity"/>
    <property type="evidence" value="ECO:0007669"/>
    <property type="project" value="UniProtKB-UniRule"/>
</dbReference>
<dbReference type="GO" id="GO:0032259">
    <property type="term" value="P:methylation"/>
    <property type="evidence" value="ECO:0007669"/>
    <property type="project" value="UniProtKB-KW"/>
</dbReference>
<dbReference type="CDD" id="cd02440">
    <property type="entry name" value="AdoMet_MTases"/>
    <property type="match status" value="1"/>
</dbReference>
<dbReference type="Gene3D" id="1.10.150.290">
    <property type="entry name" value="S-adenosyl-L-methionine-dependent methyltransferases"/>
    <property type="match status" value="1"/>
</dbReference>
<dbReference type="Gene3D" id="3.40.50.150">
    <property type="entry name" value="Vaccinia Virus protein VP39"/>
    <property type="match status" value="1"/>
</dbReference>
<dbReference type="HAMAP" id="MF_00560">
    <property type="entry name" value="Tran_acon_Me_trans"/>
    <property type="match status" value="1"/>
</dbReference>
<dbReference type="InterPro" id="IPR041698">
    <property type="entry name" value="Methyltransf_25"/>
</dbReference>
<dbReference type="InterPro" id="IPR029063">
    <property type="entry name" value="SAM-dependent_MTases_sf"/>
</dbReference>
<dbReference type="InterPro" id="IPR023506">
    <property type="entry name" value="Trans-aconitate_MeTrfase"/>
</dbReference>
<dbReference type="InterPro" id="IPR023149">
    <property type="entry name" value="Trans_acon_MeTrfase_C"/>
</dbReference>
<dbReference type="NCBIfam" id="NF002463">
    <property type="entry name" value="PRK01683.1"/>
    <property type="match status" value="1"/>
</dbReference>
<dbReference type="PANTHER" id="PTHR43861:SF1">
    <property type="entry name" value="TRANS-ACONITATE 2-METHYLTRANSFERASE"/>
    <property type="match status" value="1"/>
</dbReference>
<dbReference type="PANTHER" id="PTHR43861">
    <property type="entry name" value="TRANS-ACONITATE 2-METHYLTRANSFERASE-RELATED"/>
    <property type="match status" value="1"/>
</dbReference>
<dbReference type="Pfam" id="PF13649">
    <property type="entry name" value="Methyltransf_25"/>
    <property type="match status" value="1"/>
</dbReference>
<dbReference type="SUPFAM" id="SSF53335">
    <property type="entry name" value="S-adenosyl-L-methionine-dependent methyltransferases"/>
    <property type="match status" value="1"/>
</dbReference>
<name>TAM_YERPE</name>
<sequence length="258" mass="29353">MQDWDPDLYRQFEAERTRPATDLLAHITITSPQFISDLGCGPGNSTELLHRRFPDAQLVGIDHSQAMLASAQQRLPHCTFIEADIHQWRPSQPQNLIYANASLQWLTDHPHLFPSLLSQLAPRGVLAVQMPDNLDQPSHRAMREVAENGPWQQTLQEAGATRAKVLSANHYYDLLAPHAERVDIWRTTYYHPMPSAQAIVDWLRATGLRPYLAPLTEAMQLAFLQNYLAIIDKAYPARTDGRRLLAFPRLFIVAHAQR</sequence>
<reference key="1">
    <citation type="journal article" date="2001" name="Nature">
        <title>Genome sequence of Yersinia pestis, the causative agent of plague.</title>
        <authorList>
            <person name="Parkhill J."/>
            <person name="Wren B.W."/>
            <person name="Thomson N.R."/>
            <person name="Titball R.W."/>
            <person name="Holden M.T.G."/>
            <person name="Prentice M.B."/>
            <person name="Sebaihia M."/>
            <person name="James K.D."/>
            <person name="Churcher C.M."/>
            <person name="Mungall K.L."/>
            <person name="Baker S."/>
            <person name="Basham D."/>
            <person name="Bentley S.D."/>
            <person name="Brooks K."/>
            <person name="Cerdeno-Tarraga A.-M."/>
            <person name="Chillingworth T."/>
            <person name="Cronin A."/>
            <person name="Davies R.M."/>
            <person name="Davis P."/>
            <person name="Dougan G."/>
            <person name="Feltwell T."/>
            <person name="Hamlin N."/>
            <person name="Holroyd S."/>
            <person name="Jagels K."/>
            <person name="Karlyshev A.V."/>
            <person name="Leather S."/>
            <person name="Moule S."/>
            <person name="Oyston P.C.F."/>
            <person name="Quail M.A."/>
            <person name="Rutherford K.M."/>
            <person name="Simmonds M."/>
            <person name="Skelton J."/>
            <person name="Stevens K."/>
            <person name="Whitehead S."/>
            <person name="Barrell B.G."/>
        </authorList>
    </citation>
    <scope>NUCLEOTIDE SEQUENCE [LARGE SCALE GENOMIC DNA]</scope>
    <source>
        <strain>CO-92 / Biovar Orientalis</strain>
    </source>
</reference>
<reference key="2">
    <citation type="journal article" date="2002" name="J. Bacteriol.">
        <title>Genome sequence of Yersinia pestis KIM.</title>
        <authorList>
            <person name="Deng W."/>
            <person name="Burland V."/>
            <person name="Plunkett G. III"/>
            <person name="Boutin A."/>
            <person name="Mayhew G.F."/>
            <person name="Liss P."/>
            <person name="Perna N.T."/>
            <person name="Rose D.J."/>
            <person name="Mau B."/>
            <person name="Zhou S."/>
            <person name="Schwartz D.C."/>
            <person name="Fetherston J.D."/>
            <person name="Lindler L.E."/>
            <person name="Brubaker R.R."/>
            <person name="Plano G.V."/>
            <person name="Straley S.C."/>
            <person name="McDonough K.A."/>
            <person name="Nilles M.L."/>
            <person name="Matson J.S."/>
            <person name="Blattner F.R."/>
            <person name="Perry R.D."/>
        </authorList>
    </citation>
    <scope>NUCLEOTIDE SEQUENCE [LARGE SCALE GENOMIC DNA]</scope>
    <source>
        <strain>KIM10+ / Biovar Mediaevalis</strain>
    </source>
</reference>
<reference key="3">
    <citation type="journal article" date="2004" name="DNA Res.">
        <title>Complete genome sequence of Yersinia pestis strain 91001, an isolate avirulent to humans.</title>
        <authorList>
            <person name="Song Y."/>
            <person name="Tong Z."/>
            <person name="Wang J."/>
            <person name="Wang L."/>
            <person name="Guo Z."/>
            <person name="Han Y."/>
            <person name="Zhang J."/>
            <person name="Pei D."/>
            <person name="Zhou D."/>
            <person name="Qin H."/>
            <person name="Pang X."/>
            <person name="Han Y."/>
            <person name="Zhai J."/>
            <person name="Li M."/>
            <person name="Cui B."/>
            <person name="Qi Z."/>
            <person name="Jin L."/>
            <person name="Dai R."/>
            <person name="Chen F."/>
            <person name="Li S."/>
            <person name="Ye C."/>
            <person name="Du Z."/>
            <person name="Lin W."/>
            <person name="Wang J."/>
            <person name="Yu J."/>
            <person name="Yang H."/>
            <person name="Wang J."/>
            <person name="Huang P."/>
            <person name="Yang R."/>
        </authorList>
    </citation>
    <scope>NUCLEOTIDE SEQUENCE [LARGE SCALE GENOMIC DNA]</scope>
    <source>
        <strain>91001 / Biovar Mediaevalis</strain>
    </source>
</reference>